<proteinExistence type="inferred from homology"/>
<accession>B1I4Q9</accession>
<name>MINE_DESAP</name>
<reference key="1">
    <citation type="submission" date="2007-10" db="EMBL/GenBank/DDBJ databases">
        <title>Complete sequence of chromosome of Desulforudis audaxviator MP104C.</title>
        <authorList>
            <person name="Copeland A."/>
            <person name="Lucas S."/>
            <person name="Lapidus A."/>
            <person name="Barry K."/>
            <person name="Glavina del Rio T."/>
            <person name="Dalin E."/>
            <person name="Tice H."/>
            <person name="Bruce D."/>
            <person name="Pitluck S."/>
            <person name="Lowry S.R."/>
            <person name="Larimer F."/>
            <person name="Land M.L."/>
            <person name="Hauser L."/>
            <person name="Kyrpides N."/>
            <person name="Ivanova N.N."/>
            <person name="Richardson P."/>
        </authorList>
    </citation>
    <scope>NUCLEOTIDE SEQUENCE [LARGE SCALE GENOMIC DNA]</scope>
    <source>
        <strain>MP104C</strain>
    </source>
</reference>
<feature type="chain" id="PRO_1000114217" description="Cell division topological specificity factor">
    <location>
        <begin position="1"/>
        <end position="89"/>
    </location>
</feature>
<evidence type="ECO:0000255" key="1">
    <source>
        <dbReference type="HAMAP-Rule" id="MF_00262"/>
    </source>
</evidence>
<organism>
    <name type="scientific">Desulforudis audaxviator (strain MP104C)</name>
    <dbReference type="NCBI Taxonomy" id="477974"/>
    <lineage>
        <taxon>Bacteria</taxon>
        <taxon>Bacillati</taxon>
        <taxon>Bacillota</taxon>
        <taxon>Clostridia</taxon>
        <taxon>Thermoanaerobacterales</taxon>
        <taxon>Candidatus Desulforudaceae</taxon>
        <taxon>Candidatus Desulforudis</taxon>
    </lineage>
</organism>
<dbReference type="EMBL" id="CP000860">
    <property type="protein sequence ID" value="ACA59966.1"/>
    <property type="molecule type" value="Genomic_DNA"/>
</dbReference>
<dbReference type="SMR" id="B1I4Q9"/>
<dbReference type="STRING" id="477974.Daud_1460"/>
<dbReference type="KEGG" id="dau:Daud_1460"/>
<dbReference type="eggNOG" id="COG0851">
    <property type="taxonomic scope" value="Bacteria"/>
</dbReference>
<dbReference type="HOGENOM" id="CLU_137929_1_1_9"/>
<dbReference type="OrthoDB" id="9796578at2"/>
<dbReference type="Proteomes" id="UP000008544">
    <property type="component" value="Chromosome"/>
</dbReference>
<dbReference type="GO" id="GO:0051301">
    <property type="term" value="P:cell division"/>
    <property type="evidence" value="ECO:0007669"/>
    <property type="project" value="UniProtKB-KW"/>
</dbReference>
<dbReference type="GO" id="GO:0032955">
    <property type="term" value="P:regulation of division septum assembly"/>
    <property type="evidence" value="ECO:0007669"/>
    <property type="project" value="InterPro"/>
</dbReference>
<dbReference type="Gene3D" id="3.30.1070.10">
    <property type="entry name" value="Cell division topological specificity factor MinE"/>
    <property type="match status" value="1"/>
</dbReference>
<dbReference type="HAMAP" id="MF_00262">
    <property type="entry name" value="MinE"/>
    <property type="match status" value="1"/>
</dbReference>
<dbReference type="InterPro" id="IPR005527">
    <property type="entry name" value="MinE"/>
</dbReference>
<dbReference type="InterPro" id="IPR036707">
    <property type="entry name" value="MinE_sf"/>
</dbReference>
<dbReference type="NCBIfam" id="TIGR01215">
    <property type="entry name" value="minE"/>
    <property type="match status" value="1"/>
</dbReference>
<dbReference type="Pfam" id="PF03776">
    <property type="entry name" value="MinE"/>
    <property type="match status" value="1"/>
</dbReference>
<dbReference type="SUPFAM" id="SSF55229">
    <property type="entry name" value="Cell division protein MinE topological specificity domain"/>
    <property type="match status" value="1"/>
</dbReference>
<comment type="function">
    <text evidence="1">Prevents the cell division inhibition by proteins MinC and MinD at internal division sites while permitting inhibition at polar sites. This ensures cell division at the proper site by restricting the formation of a division septum at the midpoint of the long axis of the cell.</text>
</comment>
<comment type="similarity">
    <text evidence="1">Belongs to the MinE family.</text>
</comment>
<sequence length="89" mass="10115">MDFLARLLGRESPGSKNVAKERLRLVLIHDRADISPQLLQLLKNEIVEVISKYMEIDDKGLEVSLEHVDKQVALVANIPIRKMKRAANI</sequence>
<protein>
    <recommendedName>
        <fullName evidence="1">Cell division topological specificity factor</fullName>
    </recommendedName>
</protein>
<keyword id="KW-0131">Cell cycle</keyword>
<keyword id="KW-0132">Cell division</keyword>
<keyword id="KW-1185">Reference proteome</keyword>
<gene>
    <name evidence="1" type="primary">minE</name>
    <name type="ordered locus">Daud_1460</name>
</gene>